<dbReference type="EMBL" id="AJ721101">
    <property type="protein sequence ID" value="CAG32760.1"/>
    <property type="molecule type" value="mRNA"/>
</dbReference>
<dbReference type="RefSeq" id="NP_001006162.1">
    <property type="nucleotide sequence ID" value="NM_001006162.2"/>
</dbReference>
<dbReference type="SMR" id="Q5ZHN3"/>
<dbReference type="FunCoup" id="Q5ZHN3">
    <property type="interactions" value="1986"/>
</dbReference>
<dbReference type="STRING" id="9031.ENSGALP00000007240"/>
<dbReference type="PaxDb" id="9031-ENSGALP00000007240"/>
<dbReference type="Ensembl" id="ENSGALT00010051262.1">
    <property type="protein sequence ID" value="ENSGALP00010030453.1"/>
    <property type="gene ID" value="ENSGALG00010021162.1"/>
</dbReference>
<dbReference type="GeneID" id="416481"/>
<dbReference type="KEGG" id="gga:416481"/>
<dbReference type="CTD" id="26100"/>
<dbReference type="VEuPathDB" id="HostDB:geneid_416481"/>
<dbReference type="eggNOG" id="KOG2110">
    <property type="taxonomic scope" value="Eukaryota"/>
</dbReference>
<dbReference type="GeneTree" id="ENSGT00940000155537"/>
<dbReference type="HOGENOM" id="CLU_025895_1_1_1"/>
<dbReference type="InParanoid" id="Q5ZHN3"/>
<dbReference type="OMA" id="NIAILEM"/>
<dbReference type="OrthoDB" id="1667587at2759"/>
<dbReference type="PhylomeDB" id="Q5ZHN3"/>
<dbReference type="TreeFam" id="TF314879"/>
<dbReference type="Reactome" id="R-GGA-1632852">
    <property type="pathway name" value="Macroautophagy"/>
</dbReference>
<dbReference type="PRO" id="PR:Q5ZHN3"/>
<dbReference type="Proteomes" id="UP000000539">
    <property type="component" value="Chromosome 14"/>
</dbReference>
<dbReference type="Bgee" id="ENSGALG00000004557">
    <property type="expression patterns" value="Expressed in spermatid and 14 other cell types or tissues"/>
</dbReference>
<dbReference type="GO" id="GO:0005829">
    <property type="term" value="C:cytosol"/>
    <property type="evidence" value="ECO:0000250"/>
    <property type="project" value="UniProtKB"/>
</dbReference>
<dbReference type="GO" id="GO:0034045">
    <property type="term" value="C:phagophore assembly site membrane"/>
    <property type="evidence" value="ECO:0000250"/>
    <property type="project" value="UniProtKB"/>
</dbReference>
<dbReference type="GO" id="GO:0080025">
    <property type="term" value="F:phosphatidylinositol-3,5-bisphosphate binding"/>
    <property type="evidence" value="ECO:0000250"/>
    <property type="project" value="UniProtKB"/>
</dbReference>
<dbReference type="GO" id="GO:0032266">
    <property type="term" value="F:phosphatidylinositol-3-phosphate binding"/>
    <property type="evidence" value="ECO:0000250"/>
    <property type="project" value="UniProtKB"/>
</dbReference>
<dbReference type="GO" id="GO:0030674">
    <property type="term" value="F:protein-macromolecule adaptor activity"/>
    <property type="evidence" value="ECO:0000318"/>
    <property type="project" value="GO_Central"/>
</dbReference>
<dbReference type="GO" id="GO:0000045">
    <property type="term" value="P:autophagosome assembly"/>
    <property type="evidence" value="ECO:0000250"/>
    <property type="project" value="UniProtKB"/>
</dbReference>
<dbReference type="GO" id="GO:0000422">
    <property type="term" value="P:autophagy of mitochondrion"/>
    <property type="evidence" value="ECO:0000318"/>
    <property type="project" value="GO_Central"/>
</dbReference>
<dbReference type="GO" id="GO:0009267">
    <property type="term" value="P:cellular response to starvation"/>
    <property type="evidence" value="ECO:0000250"/>
    <property type="project" value="UniProtKB"/>
</dbReference>
<dbReference type="GO" id="GO:0061723">
    <property type="term" value="P:glycophagy"/>
    <property type="evidence" value="ECO:0000318"/>
    <property type="project" value="GO_Central"/>
</dbReference>
<dbReference type="GO" id="GO:0044804">
    <property type="term" value="P:nucleophagy"/>
    <property type="evidence" value="ECO:0000318"/>
    <property type="project" value="GO_Central"/>
</dbReference>
<dbReference type="GO" id="GO:0000425">
    <property type="term" value="P:pexophagy"/>
    <property type="evidence" value="ECO:0000318"/>
    <property type="project" value="GO_Central"/>
</dbReference>
<dbReference type="GO" id="GO:0034497">
    <property type="term" value="P:protein localization to phagophore assembly site"/>
    <property type="evidence" value="ECO:0000250"/>
    <property type="project" value="UniProtKB"/>
</dbReference>
<dbReference type="FunFam" id="2.130.10.10:FF:000145">
    <property type="entry name" value="WD repeat domain phosphoinositide-interacting protein 2"/>
    <property type="match status" value="1"/>
</dbReference>
<dbReference type="Gene3D" id="2.130.10.10">
    <property type="entry name" value="YVTN repeat-like/Quinoprotein amine dehydrogenase"/>
    <property type="match status" value="1"/>
</dbReference>
<dbReference type="InterPro" id="IPR048720">
    <property type="entry name" value="PROPPIN"/>
</dbReference>
<dbReference type="InterPro" id="IPR015943">
    <property type="entry name" value="WD40/YVTN_repeat-like_dom_sf"/>
</dbReference>
<dbReference type="InterPro" id="IPR036322">
    <property type="entry name" value="WD40_repeat_dom_sf"/>
</dbReference>
<dbReference type="InterPro" id="IPR001680">
    <property type="entry name" value="WD40_rpt"/>
</dbReference>
<dbReference type="PANTHER" id="PTHR11227">
    <property type="entry name" value="WD-REPEAT PROTEIN INTERACTING WITH PHOSPHOINOSIDES WIPI -RELATED"/>
    <property type="match status" value="1"/>
</dbReference>
<dbReference type="Pfam" id="PF21032">
    <property type="entry name" value="PROPPIN"/>
    <property type="match status" value="1"/>
</dbReference>
<dbReference type="SMART" id="SM00320">
    <property type="entry name" value="WD40"/>
    <property type="match status" value="3"/>
</dbReference>
<dbReference type="SUPFAM" id="SSF50978">
    <property type="entry name" value="WD40 repeat-like"/>
    <property type="match status" value="1"/>
</dbReference>
<accession>Q5ZHN3</accession>
<sequence>MNLAGQSGDAGSGHLLFANFNQDNTSLAVGSKSGYKFFSLSSVDKLEQIYECTDTEDVCIVERLFSSSLVAIVSLKAPRKLKVCHFKKGTEICNYSYSNTILAVKLNRQRLIVCLEESLYIHNIRDMKVLHTIRETPPNPAGLCALSINNDNCYLAYPGSATIGEVQVFDTINLRAANMIPAHDSPLAALAFDASGTKLATASEKGTVIRVFSIPEGQKLFEFRRGVKRCVSICSLAFSMDGMFLSASSNTETVHIFKLETVKEKPQEEPTTWTGYFGKVLMASTSYLPSQVTEMFNQGRAFATVRLPFCGHKNICALATIQKIPRLLVGAADGYLYMYNLDPQEGGECTLMKQHKLDGSMEPANEILESASHDRPLVAQTYSAAVTKGTYVPSSPTRHAYTEDLGAVGGACLEDETNSLRLDEDSEHPPMILRTD</sequence>
<feature type="chain" id="PRO_0000051443" description="WD repeat domain phosphoinositide-interacting protein 2">
    <location>
        <begin position="1"/>
        <end position="436"/>
    </location>
</feature>
<feature type="repeat" description="WD 1" evidence="2">
    <location>
        <begin position="182"/>
        <end position="222"/>
    </location>
</feature>
<feature type="repeat" description="WD 2" evidence="2">
    <location>
        <begin position="228"/>
        <end position="267"/>
    </location>
</feature>
<feature type="repeat" description="WD 3" evidence="2">
    <location>
        <begin position="311"/>
        <end position="349"/>
    </location>
</feature>
<feature type="short sequence motif" description="L/FRRG motif" evidence="1">
    <location>
        <begin position="223"/>
        <end position="226"/>
    </location>
</feature>
<comment type="function">
    <text evidence="1">Component of the autophagy machinery that controls the major intracellular degradation process by which cytoplasmic materials are packaged into autophagosomes and delivered to lysosomes for degradation. Involved in an early step of the formation of preautophagosomal structures.</text>
</comment>
<comment type="subcellular location">
    <subcellularLocation>
        <location evidence="1">Preautophagosomal structure membrane</location>
        <topology evidence="1">Peripheral membrane protein</topology>
        <orientation evidence="1">Cytoplasmic side</orientation>
    </subcellularLocation>
</comment>
<comment type="domain">
    <text evidence="1">The L/FRRG motif is required for recruitment to PtdIns3P.</text>
</comment>
<comment type="similarity">
    <text evidence="3">Belongs to the WD repeat PROPPIN family.</text>
</comment>
<gene>
    <name type="primary">WIPI2</name>
    <name type="ORF">RCJMB04_35d18</name>
</gene>
<proteinExistence type="evidence at transcript level"/>
<name>WIPI2_CHICK</name>
<organism>
    <name type="scientific">Gallus gallus</name>
    <name type="common">Chicken</name>
    <dbReference type="NCBI Taxonomy" id="9031"/>
    <lineage>
        <taxon>Eukaryota</taxon>
        <taxon>Metazoa</taxon>
        <taxon>Chordata</taxon>
        <taxon>Craniata</taxon>
        <taxon>Vertebrata</taxon>
        <taxon>Euteleostomi</taxon>
        <taxon>Archelosauria</taxon>
        <taxon>Archosauria</taxon>
        <taxon>Dinosauria</taxon>
        <taxon>Saurischia</taxon>
        <taxon>Theropoda</taxon>
        <taxon>Coelurosauria</taxon>
        <taxon>Aves</taxon>
        <taxon>Neognathae</taxon>
        <taxon>Galloanserae</taxon>
        <taxon>Galliformes</taxon>
        <taxon>Phasianidae</taxon>
        <taxon>Phasianinae</taxon>
        <taxon>Gallus</taxon>
    </lineage>
</organism>
<reference key="1">
    <citation type="journal article" date="2005" name="Genome Biol.">
        <title>Full-length cDNAs from chicken bursal lymphocytes to facilitate gene function analysis.</title>
        <authorList>
            <person name="Caldwell R.B."/>
            <person name="Kierzek A.M."/>
            <person name="Arakawa H."/>
            <person name="Bezzubov Y."/>
            <person name="Zaim J."/>
            <person name="Fiedler P."/>
            <person name="Kutter S."/>
            <person name="Blagodatski A."/>
            <person name="Kostovska D."/>
            <person name="Koter M."/>
            <person name="Plachy J."/>
            <person name="Carninci P."/>
            <person name="Hayashizaki Y."/>
            <person name="Buerstedde J.-M."/>
        </authorList>
    </citation>
    <scope>NUCLEOTIDE SEQUENCE [LARGE SCALE MRNA]</scope>
    <source>
        <strain>CB</strain>
        <tissue>Bursa of Fabricius</tissue>
    </source>
</reference>
<evidence type="ECO:0000250" key="1">
    <source>
        <dbReference type="UniProtKB" id="Q9Y4P8"/>
    </source>
</evidence>
<evidence type="ECO:0000255" key="2"/>
<evidence type="ECO:0000305" key="3"/>
<protein>
    <recommendedName>
        <fullName>WD repeat domain phosphoinositide-interacting protein 2</fullName>
        <shortName>WIPI-2</shortName>
    </recommendedName>
</protein>
<keyword id="KW-0072">Autophagy</keyword>
<keyword id="KW-0446">Lipid-binding</keyword>
<keyword id="KW-0472">Membrane</keyword>
<keyword id="KW-1185">Reference proteome</keyword>
<keyword id="KW-0677">Repeat</keyword>
<keyword id="KW-0853">WD repeat</keyword>